<sequence length="231" mass="24260">MARRPRPDGPQHLLALVRSAVPPVHPAGRPFIAAGLAIAAVGHRYRWLRGTGLLAAAACAGFFRHPQRVPPTRPAAIVAPADGVICAIDSAAPPAELSMGDTPLPRVSIFLSILDAHVQRAPVSGEVIAVQHRPGRFGSADLPEASDDNERTSVRIRMPNGAEVVAVQIAGLVARRIVCDAHVGDKLAIGDTYGLIRFGSRLDTYLPAGAEPIVNVGQRAVAGETVLAECR</sequence>
<feature type="chain" id="PRO_1000026652" description="Phosphatidylserine decarboxylase beta chain" evidence="1">
    <location>
        <begin position="1"/>
        <end position="199"/>
    </location>
</feature>
<feature type="chain" id="PRO_1000026653" description="Phosphatidylserine decarboxylase alpha chain" evidence="1">
    <location>
        <begin position="200"/>
        <end position="231"/>
    </location>
</feature>
<feature type="active site" description="Schiff-base intermediate with substrate; via pyruvic acid" evidence="1">
    <location>
        <position position="200"/>
    </location>
</feature>
<feature type="site" description="Cleavage (non-hydrolytic); by autocatalysis" evidence="1">
    <location>
        <begin position="199"/>
        <end position="200"/>
    </location>
</feature>
<feature type="modified residue" description="Pyruvic acid (Ser); by autocatalysis" evidence="1">
    <location>
        <position position="200"/>
    </location>
</feature>
<protein>
    <recommendedName>
        <fullName evidence="1">Phosphatidylserine decarboxylase proenzyme</fullName>
        <ecNumber evidence="1">4.1.1.65</ecNumber>
    </recommendedName>
    <component>
        <recommendedName>
            <fullName evidence="1">Phosphatidylserine decarboxylase alpha chain</fullName>
        </recommendedName>
    </component>
    <component>
        <recommendedName>
            <fullName evidence="1">Phosphatidylserine decarboxylase beta chain</fullName>
        </recommendedName>
    </component>
</protein>
<evidence type="ECO:0000255" key="1">
    <source>
        <dbReference type="HAMAP-Rule" id="MF_00664"/>
    </source>
</evidence>
<comment type="function">
    <text evidence="1">Catalyzes the formation of phosphatidylethanolamine (PtdEtn) from phosphatidylserine (PtdSer).</text>
</comment>
<comment type="catalytic activity">
    <reaction evidence="1">
        <text>a 1,2-diacyl-sn-glycero-3-phospho-L-serine + H(+) = a 1,2-diacyl-sn-glycero-3-phosphoethanolamine + CO2</text>
        <dbReference type="Rhea" id="RHEA:20828"/>
        <dbReference type="ChEBI" id="CHEBI:15378"/>
        <dbReference type="ChEBI" id="CHEBI:16526"/>
        <dbReference type="ChEBI" id="CHEBI:57262"/>
        <dbReference type="ChEBI" id="CHEBI:64612"/>
        <dbReference type="EC" id="4.1.1.65"/>
    </reaction>
</comment>
<comment type="cofactor">
    <cofactor evidence="1">
        <name>pyruvate</name>
        <dbReference type="ChEBI" id="CHEBI:15361"/>
    </cofactor>
    <text evidence="1">Binds 1 pyruvoyl group covalently per subunit.</text>
</comment>
<comment type="pathway">
    <text evidence="1">Phospholipid metabolism; phosphatidylethanolamine biosynthesis; phosphatidylethanolamine from CDP-diacylglycerol: step 2/2.</text>
</comment>
<comment type="subunit">
    <text evidence="1">Heterodimer of a large membrane-associated beta subunit and a small pyruvoyl-containing alpha subunit.</text>
</comment>
<comment type="subcellular location">
    <subcellularLocation>
        <location evidence="1">Cell membrane</location>
        <topology evidence="1">Peripheral membrane protein</topology>
    </subcellularLocation>
</comment>
<comment type="PTM">
    <text evidence="1">Is synthesized initially as an inactive proenzyme. Formation of the active enzyme involves a self-maturation process in which the active site pyruvoyl group is generated from an internal serine residue via an autocatalytic post-translational modification. Two non-identical subunits are generated from the proenzyme in this reaction, and the pyruvate is formed at the N-terminus of the alpha chain, which is derived from the carboxyl end of the proenzyme. The post-translation cleavage follows an unusual pathway, termed non-hydrolytic serinolysis, in which the side chain hydroxyl group of the serine supplies its oxygen atom to form the C-terminus of the beta chain, while the remainder of the serine residue undergoes an oxidative deamination to produce ammonia and the pyruvoyl prosthetic group on the alpha chain.</text>
</comment>
<comment type="similarity">
    <text evidence="1">Belongs to the phosphatidylserine decarboxylase family. PSD-A subfamily.</text>
</comment>
<proteinExistence type="inferred from homology"/>
<keyword id="KW-1003">Cell membrane</keyword>
<keyword id="KW-0210">Decarboxylase</keyword>
<keyword id="KW-0444">Lipid biosynthesis</keyword>
<keyword id="KW-0443">Lipid metabolism</keyword>
<keyword id="KW-0456">Lyase</keyword>
<keyword id="KW-0472">Membrane</keyword>
<keyword id="KW-0594">Phospholipid biosynthesis</keyword>
<keyword id="KW-1208">Phospholipid metabolism</keyword>
<keyword id="KW-0670">Pyruvate</keyword>
<keyword id="KW-0865">Zymogen</keyword>
<reference key="1">
    <citation type="journal article" date="2007" name="Proc. Natl. Acad. Sci. U.S.A.">
        <title>Genome plasticity of BCG and impact on vaccine efficacy.</title>
        <authorList>
            <person name="Brosch R."/>
            <person name="Gordon S.V."/>
            <person name="Garnier T."/>
            <person name="Eiglmeier K."/>
            <person name="Frigui W."/>
            <person name="Valenti P."/>
            <person name="Dos Santos S."/>
            <person name="Duthoy S."/>
            <person name="Lacroix C."/>
            <person name="Garcia-Pelayo C."/>
            <person name="Inwald J.K."/>
            <person name="Golby P."/>
            <person name="Garcia J.N."/>
            <person name="Hewinson R.G."/>
            <person name="Behr M.A."/>
            <person name="Quail M.A."/>
            <person name="Churcher C."/>
            <person name="Barrell B.G."/>
            <person name="Parkhill J."/>
            <person name="Cole S.T."/>
        </authorList>
    </citation>
    <scope>NUCLEOTIDE SEQUENCE [LARGE SCALE GENOMIC DNA]</scope>
    <source>
        <strain>BCG / Pasteur 1173P2</strain>
    </source>
</reference>
<dbReference type="EC" id="4.1.1.65" evidence="1"/>
<dbReference type="EMBL" id="AM408590">
    <property type="protein sequence ID" value="CAL70461.1"/>
    <property type="molecule type" value="Genomic_DNA"/>
</dbReference>
<dbReference type="RefSeq" id="WP_003402216.1">
    <property type="nucleotide sequence ID" value="NC_008769.1"/>
</dbReference>
<dbReference type="SMR" id="A1KFQ9"/>
<dbReference type="KEGG" id="mbb:BCG_0476c"/>
<dbReference type="HOGENOM" id="CLU_072492_0_0_11"/>
<dbReference type="UniPathway" id="UPA00558">
    <property type="reaction ID" value="UER00616"/>
</dbReference>
<dbReference type="Proteomes" id="UP000001472">
    <property type="component" value="Chromosome"/>
</dbReference>
<dbReference type="GO" id="GO:0005886">
    <property type="term" value="C:plasma membrane"/>
    <property type="evidence" value="ECO:0007669"/>
    <property type="project" value="UniProtKB-SubCell"/>
</dbReference>
<dbReference type="GO" id="GO:0004609">
    <property type="term" value="F:phosphatidylserine decarboxylase activity"/>
    <property type="evidence" value="ECO:0007669"/>
    <property type="project" value="UniProtKB-UniRule"/>
</dbReference>
<dbReference type="GO" id="GO:0006646">
    <property type="term" value="P:phosphatidylethanolamine biosynthetic process"/>
    <property type="evidence" value="ECO:0007669"/>
    <property type="project" value="UniProtKB-UniRule"/>
</dbReference>
<dbReference type="HAMAP" id="MF_00664">
    <property type="entry name" value="PS_decarb_PSD_A"/>
    <property type="match status" value="1"/>
</dbReference>
<dbReference type="InterPro" id="IPR003817">
    <property type="entry name" value="PS_Dcarbxylase"/>
</dbReference>
<dbReference type="InterPro" id="IPR033175">
    <property type="entry name" value="PSD-A"/>
</dbReference>
<dbReference type="NCBIfam" id="NF003679">
    <property type="entry name" value="PRK05305.1-3"/>
    <property type="match status" value="1"/>
</dbReference>
<dbReference type="PANTHER" id="PTHR35809">
    <property type="entry name" value="ARCHAETIDYLSERINE DECARBOXYLASE PROENZYME-RELATED"/>
    <property type="match status" value="1"/>
</dbReference>
<dbReference type="PANTHER" id="PTHR35809:SF1">
    <property type="entry name" value="ARCHAETIDYLSERINE DECARBOXYLASE PROENZYME-RELATED"/>
    <property type="match status" value="1"/>
</dbReference>
<dbReference type="Pfam" id="PF02666">
    <property type="entry name" value="PS_Dcarbxylase"/>
    <property type="match status" value="1"/>
</dbReference>
<accession>A1KFQ9</accession>
<organism>
    <name type="scientific">Mycobacterium bovis (strain BCG / Pasteur 1173P2)</name>
    <dbReference type="NCBI Taxonomy" id="410289"/>
    <lineage>
        <taxon>Bacteria</taxon>
        <taxon>Bacillati</taxon>
        <taxon>Actinomycetota</taxon>
        <taxon>Actinomycetes</taxon>
        <taxon>Mycobacteriales</taxon>
        <taxon>Mycobacteriaceae</taxon>
        <taxon>Mycobacterium</taxon>
        <taxon>Mycobacterium tuberculosis complex</taxon>
    </lineage>
</organism>
<name>PSD_MYCBP</name>
<gene>
    <name evidence="1" type="primary">psd</name>
    <name type="ordered locus">BCG_0476c</name>
</gene>